<comment type="function">
    <text evidence="1">Converts molybdopterin precursor Z into molybdopterin. This requires the incorporation of two sulfur atoms into precursor Z to generate a dithiolene group. The sulfur is provided by MoaD (By similarity).</text>
</comment>
<comment type="catalytic activity">
    <reaction>
        <text>2 [molybdopterin-synthase sulfur-carrier protein]-C-terminal-Gly-aminoethanethioate + cyclic pyranopterin phosphate + H2O = molybdopterin + 2 [molybdopterin-synthase sulfur-carrier protein]-C-terminal Gly-Gly + 2 H(+)</text>
        <dbReference type="Rhea" id="RHEA:26333"/>
        <dbReference type="Rhea" id="RHEA-COMP:12202"/>
        <dbReference type="Rhea" id="RHEA-COMP:19907"/>
        <dbReference type="ChEBI" id="CHEBI:15377"/>
        <dbReference type="ChEBI" id="CHEBI:15378"/>
        <dbReference type="ChEBI" id="CHEBI:58698"/>
        <dbReference type="ChEBI" id="CHEBI:59648"/>
        <dbReference type="ChEBI" id="CHEBI:90778"/>
        <dbReference type="ChEBI" id="CHEBI:232372"/>
        <dbReference type="EC" id="2.8.1.12"/>
    </reaction>
</comment>
<comment type="pathway">
    <text>Cofactor biosynthesis; molybdopterin biosynthesis.</text>
</comment>
<comment type="subunit">
    <text evidence="1">Heterotetramer of 2 MoaD subunits and 2 MoaE subunits. Also stable as homodimer. The enzyme changes between these two forms during catalysis (By similarity).</text>
</comment>
<comment type="similarity">
    <text evidence="3">Belongs to the MoaE family.</text>
</comment>
<gene>
    <name type="primary">moaE</name>
    <name type="ordered locus">mlr7915</name>
</gene>
<organism>
    <name type="scientific">Mesorhizobium japonicum (strain LMG 29417 / CECT 9101 / MAFF 303099)</name>
    <name type="common">Mesorhizobium loti (strain MAFF 303099)</name>
    <dbReference type="NCBI Taxonomy" id="266835"/>
    <lineage>
        <taxon>Bacteria</taxon>
        <taxon>Pseudomonadati</taxon>
        <taxon>Pseudomonadota</taxon>
        <taxon>Alphaproteobacteria</taxon>
        <taxon>Hyphomicrobiales</taxon>
        <taxon>Phyllobacteriaceae</taxon>
        <taxon>Mesorhizobium</taxon>
    </lineage>
</organism>
<feature type="chain" id="PRO_0000163092" description="Molybdopterin synthase catalytic subunit">
    <location>
        <begin position="1"/>
        <end position="159"/>
    </location>
</feature>
<feature type="region of interest" description="Disordered" evidence="2">
    <location>
        <begin position="130"/>
        <end position="159"/>
    </location>
</feature>
<feature type="binding site" evidence="1">
    <location>
        <begin position="41"/>
        <end position="43"/>
    </location>
    <ligand>
        <name>substrate</name>
    </ligand>
</feature>
<feature type="binding site" evidence="1">
    <location>
        <begin position="105"/>
        <end position="106"/>
    </location>
    <ligand>
        <name>substrate</name>
    </ligand>
</feature>
<feature type="binding site" evidence="1">
    <location>
        <position position="121"/>
    </location>
    <ligand>
        <name>substrate</name>
    </ligand>
</feature>
<feature type="binding site" evidence="1">
    <location>
        <begin position="128"/>
        <end position="130"/>
    </location>
    <ligand>
        <name>substrate</name>
    </ligand>
</feature>
<sequence length="159" mass="17369">MSAVLAPTVRIQRQDFDVAAEIAALTQGRADVGAVVSFSGLCRDEQGALSALELEHYPGMAEAEIGRIAAEAVERWPLQGLTVIHRHGKIRPGENIVLVVAASAHRQAAFEAANFLMDYLKSRAPFWKKEHRTDGSEGGWVEAKETDTQAAKRWKSSSE</sequence>
<reference key="1">
    <citation type="journal article" date="2000" name="DNA Res.">
        <title>Complete genome structure of the nitrogen-fixing symbiotic bacterium Mesorhizobium loti.</title>
        <authorList>
            <person name="Kaneko T."/>
            <person name="Nakamura Y."/>
            <person name="Sato S."/>
            <person name="Asamizu E."/>
            <person name="Kato T."/>
            <person name="Sasamoto S."/>
            <person name="Watanabe A."/>
            <person name="Idesawa K."/>
            <person name="Ishikawa A."/>
            <person name="Kawashima K."/>
            <person name="Kimura T."/>
            <person name="Kishida Y."/>
            <person name="Kiyokawa C."/>
            <person name="Kohara M."/>
            <person name="Matsumoto M."/>
            <person name="Matsuno A."/>
            <person name="Mochizuki Y."/>
            <person name="Nakayama S."/>
            <person name="Nakazaki N."/>
            <person name="Shimpo S."/>
            <person name="Sugimoto M."/>
            <person name="Takeuchi C."/>
            <person name="Yamada M."/>
            <person name="Tabata S."/>
        </authorList>
    </citation>
    <scope>NUCLEOTIDE SEQUENCE [LARGE SCALE GENOMIC DNA]</scope>
    <source>
        <strain>LMG 29417 / CECT 9101 / MAFF 303099</strain>
    </source>
</reference>
<name>MOAE_RHILO</name>
<proteinExistence type="inferred from homology"/>
<dbReference type="EC" id="2.8.1.12"/>
<dbReference type="EMBL" id="BA000012">
    <property type="protein sequence ID" value="BAB54273.1"/>
    <property type="molecule type" value="Genomic_DNA"/>
</dbReference>
<dbReference type="RefSeq" id="WP_010915215.1">
    <property type="nucleotide sequence ID" value="NC_002678.2"/>
</dbReference>
<dbReference type="SMR" id="Q984P0"/>
<dbReference type="KEGG" id="mlo:mlr7915"/>
<dbReference type="eggNOG" id="COG0314">
    <property type="taxonomic scope" value="Bacteria"/>
</dbReference>
<dbReference type="HOGENOM" id="CLU_089568_2_1_5"/>
<dbReference type="UniPathway" id="UPA00344"/>
<dbReference type="Proteomes" id="UP000000552">
    <property type="component" value="Chromosome"/>
</dbReference>
<dbReference type="GO" id="GO:0030366">
    <property type="term" value="F:molybdopterin synthase activity"/>
    <property type="evidence" value="ECO:0007669"/>
    <property type="project" value="UniProtKB-EC"/>
</dbReference>
<dbReference type="GO" id="GO:0006777">
    <property type="term" value="P:Mo-molybdopterin cofactor biosynthetic process"/>
    <property type="evidence" value="ECO:0007669"/>
    <property type="project" value="UniProtKB-KW"/>
</dbReference>
<dbReference type="CDD" id="cd00756">
    <property type="entry name" value="MoaE"/>
    <property type="match status" value="1"/>
</dbReference>
<dbReference type="Gene3D" id="3.90.1170.40">
    <property type="entry name" value="Molybdopterin biosynthesis MoaE subunit"/>
    <property type="match status" value="1"/>
</dbReference>
<dbReference type="InterPro" id="IPR036563">
    <property type="entry name" value="MoaE_sf"/>
</dbReference>
<dbReference type="InterPro" id="IPR003448">
    <property type="entry name" value="Mopterin_biosynth_MoaE"/>
</dbReference>
<dbReference type="PANTHER" id="PTHR23404">
    <property type="entry name" value="MOLYBDOPTERIN SYNTHASE RELATED"/>
    <property type="match status" value="1"/>
</dbReference>
<dbReference type="Pfam" id="PF02391">
    <property type="entry name" value="MoaE"/>
    <property type="match status" value="1"/>
</dbReference>
<dbReference type="SUPFAM" id="SSF54690">
    <property type="entry name" value="Molybdopterin synthase subunit MoaE"/>
    <property type="match status" value="1"/>
</dbReference>
<accession>Q984P0</accession>
<evidence type="ECO:0000250" key="1"/>
<evidence type="ECO:0000256" key="2">
    <source>
        <dbReference type="SAM" id="MobiDB-lite"/>
    </source>
</evidence>
<evidence type="ECO:0000305" key="3"/>
<protein>
    <recommendedName>
        <fullName>Molybdopterin synthase catalytic subunit</fullName>
        <ecNumber>2.8.1.12</ecNumber>
    </recommendedName>
    <alternativeName>
        <fullName>MPT synthase subunit 2</fullName>
    </alternativeName>
    <alternativeName>
        <fullName>Molybdenum cofactor biosynthesis protein E</fullName>
    </alternativeName>
    <alternativeName>
        <fullName>Molybdopterin-converting factor large subunit</fullName>
    </alternativeName>
    <alternativeName>
        <fullName>Molybdopterin-converting factor subunit 2</fullName>
    </alternativeName>
</protein>
<keyword id="KW-0501">Molybdenum cofactor biosynthesis</keyword>
<keyword id="KW-0808">Transferase</keyword>